<name>CD40L_AOTTR</name>
<feature type="chain" id="PRO_0000034472" description="CD40 ligand, membrane form">
    <location>
        <begin position="1"/>
        <end position="261"/>
    </location>
</feature>
<feature type="chain" id="PRO_0000034473" description="CD40 ligand, soluble form" evidence="3">
    <location>
        <begin position="113"/>
        <end position="261"/>
    </location>
</feature>
<feature type="topological domain" description="Cytoplasmic" evidence="4">
    <location>
        <begin position="1"/>
        <end position="22"/>
    </location>
</feature>
<feature type="transmembrane region" description="Helical; Signal-anchor for type II membrane protein" evidence="4">
    <location>
        <begin position="23"/>
        <end position="43"/>
    </location>
</feature>
<feature type="topological domain" description="Extracellular" evidence="4">
    <location>
        <begin position="44"/>
        <end position="261"/>
    </location>
</feature>
<feature type="domain" description="THD" evidence="5">
    <location>
        <begin position="122"/>
        <end position="261"/>
    </location>
</feature>
<feature type="site" description="Cleavage" evidence="1">
    <location>
        <begin position="112"/>
        <end position="113"/>
    </location>
</feature>
<feature type="glycosylation site" description="N-linked (GlcNAc...) asparagine" evidence="4">
    <location>
        <position position="240"/>
    </location>
</feature>
<feature type="disulfide bond" evidence="5">
    <location>
        <begin position="178"/>
        <end position="218"/>
    </location>
</feature>
<evidence type="ECO:0000250" key="1"/>
<evidence type="ECO:0000250" key="2">
    <source>
        <dbReference type="UniProtKB" id="P27548"/>
    </source>
</evidence>
<evidence type="ECO:0000250" key="3">
    <source>
        <dbReference type="UniProtKB" id="P29965"/>
    </source>
</evidence>
<evidence type="ECO:0000255" key="4"/>
<evidence type="ECO:0000255" key="5">
    <source>
        <dbReference type="PROSITE-ProRule" id="PRU01387"/>
    </source>
</evidence>
<evidence type="ECO:0000305" key="6"/>
<comment type="function">
    <text evidence="2 3">Cytokine that acts as a ligand to CD40/TNFRSF5 (By similarity). Costimulates T-cell proliferation and cytokine production (By similarity). Its cross-linking on T-cells generates a costimulatory signal which enhances the production of IL4 and IL10 in conjunction with the TCR/CD3 ligation and CD28 costimulation (By similarity). Induces the activation of NF-kappa-B (By similarity). Induces the activation of kinases MAPK8 and PAK2 in T-cells (By similarity). Mediates B-cell proliferation in the absence of co-stimulus as well as IgE production in the presence of IL4 (By similarity). Involved in immunoglobulin class switching (By similarity).</text>
</comment>
<comment type="function">
    <molecule>CD40 ligand, soluble form</molecule>
    <text evidence="3">Acts as a ligand for integrins, specifically ITGA5:ITGB1 and ITGAV:ITGB3; both integrins and the CD40 receptor are required for activation of CD40-CD40LG signaling, which have cell-type dependent effects, such as B-cell activation, NF-kappa-B signaling and anti-apoptotic signaling.</text>
</comment>
<comment type="subunit">
    <text evidence="3">Homotrimer (By similarity). Interacts with CD28 (By similarity). CD40 ligand, soluble form: Exists as either a monomer or a homotrimer (By similarity). Forms a ternary complex between CD40 and integrins for CD40-CD40LG signaling (By similarity).</text>
</comment>
<comment type="subcellular location">
    <subcellularLocation>
        <location evidence="3">Cell membrane</location>
        <topology evidence="3">Single-pass type II membrane protein</topology>
    </subcellularLocation>
    <subcellularLocation>
        <location evidence="3">Cell surface</location>
    </subcellularLocation>
</comment>
<comment type="subcellular location">
    <molecule>CD40 ligand, soluble form</molecule>
    <subcellularLocation>
        <location evidence="3">Secreted</location>
    </subcellularLocation>
    <text evidence="3">Release of soluble CD40L from platelets is partially regulated by GP IIb/IIIa, actin polymerization, and a matrix metalloproteinases (MMP) inhibitor-sensitive pathway.</text>
</comment>
<comment type="PTM">
    <text evidence="3">The soluble form derives from the membrane form by proteolytic processing.</text>
</comment>
<comment type="similarity">
    <text evidence="6">Belongs to the tumor necrosis factor family.</text>
</comment>
<gene>
    <name type="primary">CD40LG</name>
    <name type="synonym">CD40L</name>
    <name type="synonym">TNFSF5</name>
</gene>
<dbReference type="EMBL" id="AF344860">
    <property type="protein sequence ID" value="AAK37542.1"/>
    <property type="molecule type" value="mRNA"/>
</dbReference>
<dbReference type="SMR" id="Q9BDM3"/>
<dbReference type="GlyCosmos" id="Q9BDM3">
    <property type="glycosylation" value="1 site, No reported glycans"/>
</dbReference>
<dbReference type="GO" id="GO:0009986">
    <property type="term" value="C:cell surface"/>
    <property type="evidence" value="ECO:0000250"/>
    <property type="project" value="UniProtKB"/>
</dbReference>
<dbReference type="GO" id="GO:0005615">
    <property type="term" value="C:extracellular space"/>
    <property type="evidence" value="ECO:0007669"/>
    <property type="project" value="UniProtKB-KW"/>
</dbReference>
<dbReference type="GO" id="GO:0005886">
    <property type="term" value="C:plasma membrane"/>
    <property type="evidence" value="ECO:0007669"/>
    <property type="project" value="UniProtKB-SubCell"/>
</dbReference>
<dbReference type="GO" id="GO:0005174">
    <property type="term" value="F:CD40 receptor binding"/>
    <property type="evidence" value="ECO:0000250"/>
    <property type="project" value="UniProtKB"/>
</dbReference>
<dbReference type="GO" id="GO:0005125">
    <property type="term" value="F:cytokine activity"/>
    <property type="evidence" value="ECO:0007669"/>
    <property type="project" value="UniProtKB-KW"/>
</dbReference>
<dbReference type="GO" id="GO:0043539">
    <property type="term" value="F:protein serine/threonine kinase activator activity"/>
    <property type="evidence" value="ECO:0000250"/>
    <property type="project" value="UniProtKB"/>
</dbReference>
<dbReference type="GO" id="GO:0005164">
    <property type="term" value="F:tumor necrosis factor receptor binding"/>
    <property type="evidence" value="ECO:0007669"/>
    <property type="project" value="InterPro"/>
</dbReference>
<dbReference type="GO" id="GO:0042100">
    <property type="term" value="P:B cell proliferation"/>
    <property type="evidence" value="ECO:0000250"/>
    <property type="project" value="UniProtKB"/>
</dbReference>
<dbReference type="GO" id="GO:0006955">
    <property type="term" value="P:immune response"/>
    <property type="evidence" value="ECO:0007669"/>
    <property type="project" value="InterPro"/>
</dbReference>
<dbReference type="GO" id="GO:0006954">
    <property type="term" value="P:inflammatory response"/>
    <property type="evidence" value="ECO:0000250"/>
    <property type="project" value="UniProtKB"/>
</dbReference>
<dbReference type="GO" id="GO:0030168">
    <property type="term" value="P:platelet activation"/>
    <property type="evidence" value="ECO:0000250"/>
    <property type="project" value="UniProtKB"/>
</dbReference>
<dbReference type="GO" id="GO:0032733">
    <property type="term" value="P:positive regulation of interleukin-10 production"/>
    <property type="evidence" value="ECO:0000250"/>
    <property type="project" value="UniProtKB"/>
</dbReference>
<dbReference type="GO" id="GO:0032753">
    <property type="term" value="P:positive regulation of interleukin-4 production"/>
    <property type="evidence" value="ECO:0000250"/>
    <property type="project" value="UniProtKB"/>
</dbReference>
<dbReference type="GO" id="GO:0051092">
    <property type="term" value="P:positive regulation of NF-kappaB transcription factor activity"/>
    <property type="evidence" value="ECO:0000250"/>
    <property type="project" value="UniProtKB"/>
</dbReference>
<dbReference type="GO" id="GO:0042102">
    <property type="term" value="P:positive regulation of T cell proliferation"/>
    <property type="evidence" value="ECO:0000250"/>
    <property type="project" value="UniProtKB"/>
</dbReference>
<dbReference type="CDD" id="cd00184">
    <property type="entry name" value="TNF"/>
    <property type="match status" value="1"/>
</dbReference>
<dbReference type="FunFam" id="2.60.120.40:FF:000013">
    <property type="entry name" value="CD40 ligand"/>
    <property type="match status" value="1"/>
</dbReference>
<dbReference type="Gene3D" id="2.60.120.40">
    <property type="match status" value="1"/>
</dbReference>
<dbReference type="InterPro" id="IPR003263">
    <property type="entry name" value="CD40L"/>
</dbReference>
<dbReference type="InterPro" id="IPR021184">
    <property type="entry name" value="TNF_CS"/>
</dbReference>
<dbReference type="InterPro" id="IPR006052">
    <property type="entry name" value="TNF_dom"/>
</dbReference>
<dbReference type="InterPro" id="IPR008983">
    <property type="entry name" value="Tumour_necrosis_fac-like_dom"/>
</dbReference>
<dbReference type="PANTHER" id="PTHR11471:SF5">
    <property type="entry name" value="CD40 LIGAND"/>
    <property type="match status" value="1"/>
</dbReference>
<dbReference type="PANTHER" id="PTHR11471">
    <property type="entry name" value="TUMOR NECROSIS FACTOR FAMILY MEMBER"/>
    <property type="match status" value="1"/>
</dbReference>
<dbReference type="Pfam" id="PF00229">
    <property type="entry name" value="TNF"/>
    <property type="match status" value="1"/>
</dbReference>
<dbReference type="PIRSF" id="PIRSF016527">
    <property type="entry name" value="TNF_5"/>
    <property type="match status" value="1"/>
</dbReference>
<dbReference type="PRINTS" id="PR01702">
    <property type="entry name" value="CD40LIGAND"/>
</dbReference>
<dbReference type="SMART" id="SM00207">
    <property type="entry name" value="TNF"/>
    <property type="match status" value="1"/>
</dbReference>
<dbReference type="SUPFAM" id="SSF49842">
    <property type="entry name" value="TNF-like"/>
    <property type="match status" value="1"/>
</dbReference>
<dbReference type="PROSITE" id="PS00251">
    <property type="entry name" value="THD_1"/>
    <property type="match status" value="1"/>
</dbReference>
<dbReference type="PROSITE" id="PS50049">
    <property type="entry name" value="THD_2"/>
    <property type="match status" value="1"/>
</dbReference>
<accession>Q9BDM3</accession>
<reference key="1">
    <citation type="journal article" date="2001" name="Immunogenetics">
        <title>Cloning, sequencing, and homology analysis of nonhuman primate Fas/Fas-ligand and co-stimulatory molecules.</title>
        <authorList>
            <person name="Villinger F.J."/>
            <person name="Bostik P."/>
            <person name="Mayne A.E."/>
            <person name="King C.L."/>
            <person name="Genain C.P."/>
            <person name="Weiss W.R."/>
            <person name="Ansari A.A."/>
        </authorList>
    </citation>
    <scope>NUCLEOTIDE SEQUENCE [MRNA]</scope>
    <source>
        <tissue>Lymphocyte</tissue>
    </source>
</reference>
<sequence length="261" mass="29357">MVETYHQPAPRSAATGLPVSMKIFMYLLTVFLITQMIGSALFAVYLHRRLDKIEDERNLHEDFVFMKTIQRCNTGERSLSLLNCEEIKSQFEGFVKDIMLNKEEKKKENSFEMQKGDQNPQIAAHVISEASSKTTSVLQWAEKGYYTMSNNLVTLENGKQLTVKRQGLYYIYAQVTFCSNREASSQAPFIASLCLKPPNRFERILLRAANTHSSAKPCGQQSIHLGGIFELQPGASVFVNVTDPSQVSHGTGFTSFGLLKL</sequence>
<organism>
    <name type="scientific">Aotus trivirgatus</name>
    <name type="common">Three-striped night monkey</name>
    <name type="synonym">Douroucouli</name>
    <dbReference type="NCBI Taxonomy" id="9505"/>
    <lineage>
        <taxon>Eukaryota</taxon>
        <taxon>Metazoa</taxon>
        <taxon>Chordata</taxon>
        <taxon>Craniata</taxon>
        <taxon>Vertebrata</taxon>
        <taxon>Euteleostomi</taxon>
        <taxon>Mammalia</taxon>
        <taxon>Eutheria</taxon>
        <taxon>Euarchontoglires</taxon>
        <taxon>Primates</taxon>
        <taxon>Haplorrhini</taxon>
        <taxon>Platyrrhini</taxon>
        <taxon>Aotidae</taxon>
        <taxon>Aotus</taxon>
    </lineage>
</organism>
<keyword id="KW-1003">Cell membrane</keyword>
<keyword id="KW-0202">Cytokine</keyword>
<keyword id="KW-1015">Disulfide bond</keyword>
<keyword id="KW-0325">Glycoprotein</keyword>
<keyword id="KW-0472">Membrane</keyword>
<keyword id="KW-0964">Secreted</keyword>
<keyword id="KW-0735">Signal-anchor</keyword>
<keyword id="KW-0812">Transmembrane</keyword>
<keyword id="KW-1133">Transmembrane helix</keyword>
<protein>
    <recommendedName>
        <fullName>CD40 ligand</fullName>
        <shortName>CD40-L</shortName>
    </recommendedName>
    <alternativeName>
        <fullName>Tumor necrosis factor ligand superfamily member 5</fullName>
    </alternativeName>
    <cdAntigenName>CD154</cdAntigenName>
    <component>
        <recommendedName>
            <fullName>CD40 ligand, membrane form</fullName>
        </recommendedName>
    </component>
    <component>
        <recommendedName>
            <fullName evidence="3">CD40 ligand, soluble form</fullName>
            <shortName evidence="3">sCD40L</shortName>
        </recommendedName>
    </component>
</protein>
<proteinExistence type="evidence at transcript level"/>